<proteinExistence type="inferred from homology"/>
<reference key="1">
    <citation type="submission" date="2007-05" db="EMBL/GenBank/DDBJ databases">
        <title>Complete sequence of Thermotoga petrophila RKU-1.</title>
        <authorList>
            <consortium name="US DOE Joint Genome Institute"/>
            <person name="Copeland A."/>
            <person name="Lucas S."/>
            <person name="Lapidus A."/>
            <person name="Barry K."/>
            <person name="Glavina del Rio T."/>
            <person name="Dalin E."/>
            <person name="Tice H."/>
            <person name="Pitluck S."/>
            <person name="Sims D."/>
            <person name="Brettin T."/>
            <person name="Bruce D."/>
            <person name="Detter J.C."/>
            <person name="Han C."/>
            <person name="Tapia R."/>
            <person name="Schmutz J."/>
            <person name="Larimer F."/>
            <person name="Land M."/>
            <person name="Hauser L."/>
            <person name="Kyrpides N."/>
            <person name="Mikhailova N."/>
            <person name="Nelson K."/>
            <person name="Gogarten J.P."/>
            <person name="Noll K."/>
            <person name="Richardson P."/>
        </authorList>
    </citation>
    <scope>NUCLEOTIDE SEQUENCE [LARGE SCALE GENOMIC DNA]</scope>
    <source>
        <strain>ATCC BAA-488 / DSM 13995 / JCM 10881 / RKU-1</strain>
    </source>
</reference>
<sequence>MVSLEARVREVKGKREARRLRRNGEVPAVVYGPATEPIPVKIKRSVLEKVFHTISEATPIQLIIKDDQGNTVSEKTVFLKMIQRDKVSETVVHLDFYEPTKGHRMRINVPLKVVGKPVGVEKGGFLEVFHEEIPVETDPDNVPQEIEVDVSSLDLGDVIYARDLKLPEGVKCLLGDEEVVVSVLVPKEVVIEETTEAEETAEPEVIRRKEEEEE</sequence>
<accession>A5ILV5</accession>
<dbReference type="EMBL" id="CP000702">
    <property type="protein sequence ID" value="ABQ47178.1"/>
    <property type="molecule type" value="Genomic_DNA"/>
</dbReference>
<dbReference type="RefSeq" id="WP_011943692.1">
    <property type="nucleotide sequence ID" value="NC_009486.1"/>
</dbReference>
<dbReference type="SMR" id="A5ILV5"/>
<dbReference type="STRING" id="390874.Tpet_1164"/>
<dbReference type="KEGG" id="tpt:Tpet_1164"/>
<dbReference type="eggNOG" id="COG1825">
    <property type="taxonomic scope" value="Bacteria"/>
</dbReference>
<dbReference type="HOGENOM" id="CLU_075939_2_1_0"/>
<dbReference type="Proteomes" id="UP000006558">
    <property type="component" value="Chromosome"/>
</dbReference>
<dbReference type="GO" id="GO:0022625">
    <property type="term" value="C:cytosolic large ribosomal subunit"/>
    <property type="evidence" value="ECO:0007669"/>
    <property type="project" value="TreeGrafter"/>
</dbReference>
<dbReference type="GO" id="GO:0008097">
    <property type="term" value="F:5S rRNA binding"/>
    <property type="evidence" value="ECO:0007669"/>
    <property type="project" value="InterPro"/>
</dbReference>
<dbReference type="GO" id="GO:0003735">
    <property type="term" value="F:structural constituent of ribosome"/>
    <property type="evidence" value="ECO:0007669"/>
    <property type="project" value="InterPro"/>
</dbReference>
<dbReference type="GO" id="GO:0006412">
    <property type="term" value="P:translation"/>
    <property type="evidence" value="ECO:0007669"/>
    <property type="project" value="UniProtKB-UniRule"/>
</dbReference>
<dbReference type="CDD" id="cd00495">
    <property type="entry name" value="Ribosomal_L25_TL5_CTC"/>
    <property type="match status" value="1"/>
</dbReference>
<dbReference type="FunFam" id="2.170.120.20:FF:000003">
    <property type="entry name" value="50S ribosomal protein L25"/>
    <property type="match status" value="1"/>
</dbReference>
<dbReference type="Gene3D" id="2.170.120.20">
    <property type="entry name" value="Ribosomal protein L25, beta domain"/>
    <property type="match status" value="1"/>
</dbReference>
<dbReference type="Gene3D" id="2.40.240.10">
    <property type="entry name" value="Ribosomal Protein L25, Chain P"/>
    <property type="match status" value="1"/>
</dbReference>
<dbReference type="HAMAP" id="MF_01334">
    <property type="entry name" value="Ribosomal_bL25_CTC"/>
    <property type="match status" value="1"/>
</dbReference>
<dbReference type="InterPro" id="IPR020056">
    <property type="entry name" value="Rbsml_bL25/Gln-tRNA_synth_N"/>
</dbReference>
<dbReference type="InterPro" id="IPR011035">
    <property type="entry name" value="Ribosomal_bL25/Gln-tRNA_synth"/>
</dbReference>
<dbReference type="InterPro" id="IPR020057">
    <property type="entry name" value="Ribosomal_bL25_b-dom"/>
</dbReference>
<dbReference type="InterPro" id="IPR037121">
    <property type="entry name" value="Ribosomal_bL25_C"/>
</dbReference>
<dbReference type="InterPro" id="IPR001021">
    <property type="entry name" value="Ribosomal_bL25_long"/>
</dbReference>
<dbReference type="InterPro" id="IPR029751">
    <property type="entry name" value="Ribosomal_L25_dom"/>
</dbReference>
<dbReference type="InterPro" id="IPR020930">
    <property type="entry name" value="Ribosomal_uL5_bac-type"/>
</dbReference>
<dbReference type="NCBIfam" id="TIGR00731">
    <property type="entry name" value="bL25_bact_ctc"/>
    <property type="match status" value="1"/>
</dbReference>
<dbReference type="PANTHER" id="PTHR33284">
    <property type="entry name" value="RIBOSOMAL PROTEIN L25/GLN-TRNA SYNTHETASE, ANTI-CODON-BINDING DOMAIN-CONTAINING PROTEIN"/>
    <property type="match status" value="1"/>
</dbReference>
<dbReference type="PANTHER" id="PTHR33284:SF1">
    <property type="entry name" value="RIBOSOMAL PROTEIN L25_GLN-TRNA SYNTHETASE, ANTI-CODON-BINDING DOMAIN-CONTAINING PROTEIN"/>
    <property type="match status" value="1"/>
</dbReference>
<dbReference type="Pfam" id="PF01386">
    <property type="entry name" value="Ribosomal_L25p"/>
    <property type="match status" value="1"/>
</dbReference>
<dbReference type="Pfam" id="PF14693">
    <property type="entry name" value="Ribosomal_TL5_C"/>
    <property type="match status" value="1"/>
</dbReference>
<dbReference type="SUPFAM" id="SSF50715">
    <property type="entry name" value="Ribosomal protein L25-like"/>
    <property type="match status" value="1"/>
</dbReference>
<comment type="function">
    <text evidence="1">This is one of the proteins that binds to the 5S RNA in the ribosome where it forms part of the central protuberance.</text>
</comment>
<comment type="subunit">
    <text evidence="1">Part of the 50S ribosomal subunit; part of the 5S rRNA/L5/L18/L25 subcomplex. Contacts the 5S rRNA. Binds to the 5S rRNA independently of L5 and L18.</text>
</comment>
<comment type="similarity">
    <text evidence="1">Belongs to the bacterial ribosomal protein bL25 family. CTC subfamily.</text>
</comment>
<evidence type="ECO:0000255" key="1">
    <source>
        <dbReference type="HAMAP-Rule" id="MF_01334"/>
    </source>
</evidence>
<evidence type="ECO:0000256" key="2">
    <source>
        <dbReference type="SAM" id="MobiDB-lite"/>
    </source>
</evidence>
<evidence type="ECO:0000305" key="3"/>
<keyword id="KW-0687">Ribonucleoprotein</keyword>
<keyword id="KW-0689">Ribosomal protein</keyword>
<keyword id="KW-0694">RNA-binding</keyword>
<keyword id="KW-0699">rRNA-binding</keyword>
<organism>
    <name type="scientific">Thermotoga petrophila (strain ATCC BAA-488 / DSM 13995 / JCM 10881 / RKU-1)</name>
    <dbReference type="NCBI Taxonomy" id="390874"/>
    <lineage>
        <taxon>Bacteria</taxon>
        <taxon>Thermotogati</taxon>
        <taxon>Thermotogota</taxon>
        <taxon>Thermotogae</taxon>
        <taxon>Thermotogales</taxon>
        <taxon>Thermotogaceae</taxon>
        <taxon>Thermotoga</taxon>
    </lineage>
</organism>
<gene>
    <name evidence="1" type="primary">rplY</name>
    <name evidence="1" type="synonym">ctc</name>
    <name type="ordered locus">Tpet_1164</name>
</gene>
<feature type="chain" id="PRO_1000052943" description="Large ribosomal subunit protein bL25">
    <location>
        <begin position="1"/>
        <end position="214"/>
    </location>
</feature>
<feature type="region of interest" description="Disordered" evidence="2">
    <location>
        <begin position="194"/>
        <end position="214"/>
    </location>
</feature>
<feature type="compositionally biased region" description="Basic and acidic residues" evidence="2">
    <location>
        <begin position="204"/>
        <end position="214"/>
    </location>
</feature>
<name>RL25_THEP1</name>
<protein>
    <recommendedName>
        <fullName evidence="1">Large ribosomal subunit protein bL25</fullName>
    </recommendedName>
    <alternativeName>
        <fullName evidence="3">50S ribosomal protein L25</fullName>
    </alternativeName>
    <alternativeName>
        <fullName evidence="1">General stress protein CTC</fullName>
    </alternativeName>
</protein>